<gene>
    <name evidence="1" type="primary">dnaA</name>
    <name type="ordered locus">SPH_0001</name>
</gene>
<evidence type="ECO:0000255" key="1">
    <source>
        <dbReference type="HAMAP-Rule" id="MF_00377"/>
    </source>
</evidence>
<proteinExistence type="inferred from homology"/>
<accession>B1I6X3</accession>
<keyword id="KW-0067">ATP-binding</keyword>
<keyword id="KW-0963">Cytoplasm</keyword>
<keyword id="KW-0235">DNA replication</keyword>
<keyword id="KW-0238">DNA-binding</keyword>
<keyword id="KW-0446">Lipid-binding</keyword>
<keyword id="KW-0547">Nucleotide-binding</keyword>
<organism>
    <name type="scientific">Streptococcus pneumoniae (strain Hungary19A-6)</name>
    <dbReference type="NCBI Taxonomy" id="487214"/>
    <lineage>
        <taxon>Bacteria</taxon>
        <taxon>Bacillati</taxon>
        <taxon>Bacillota</taxon>
        <taxon>Bacilli</taxon>
        <taxon>Lactobacillales</taxon>
        <taxon>Streptococcaceae</taxon>
        <taxon>Streptococcus</taxon>
    </lineage>
</organism>
<protein>
    <recommendedName>
        <fullName evidence="1">Chromosomal replication initiator protein DnaA</fullName>
    </recommendedName>
</protein>
<dbReference type="EMBL" id="CP000936">
    <property type="protein sequence ID" value="ACA35587.1"/>
    <property type="molecule type" value="Genomic_DNA"/>
</dbReference>
<dbReference type="RefSeq" id="WP_000660615.1">
    <property type="nucleotide sequence ID" value="NC_010380.1"/>
</dbReference>
<dbReference type="SMR" id="B1I6X3"/>
<dbReference type="GeneID" id="45652535"/>
<dbReference type="KEGG" id="spv:SPH_0001"/>
<dbReference type="HOGENOM" id="CLU_026910_3_1_9"/>
<dbReference type="Proteomes" id="UP000002163">
    <property type="component" value="Chromosome"/>
</dbReference>
<dbReference type="GO" id="GO:0005737">
    <property type="term" value="C:cytoplasm"/>
    <property type="evidence" value="ECO:0007669"/>
    <property type="project" value="UniProtKB-SubCell"/>
</dbReference>
<dbReference type="GO" id="GO:0005886">
    <property type="term" value="C:plasma membrane"/>
    <property type="evidence" value="ECO:0007669"/>
    <property type="project" value="TreeGrafter"/>
</dbReference>
<dbReference type="GO" id="GO:0005524">
    <property type="term" value="F:ATP binding"/>
    <property type="evidence" value="ECO:0007669"/>
    <property type="project" value="UniProtKB-UniRule"/>
</dbReference>
<dbReference type="GO" id="GO:0016887">
    <property type="term" value="F:ATP hydrolysis activity"/>
    <property type="evidence" value="ECO:0007669"/>
    <property type="project" value="InterPro"/>
</dbReference>
<dbReference type="GO" id="GO:0003688">
    <property type="term" value="F:DNA replication origin binding"/>
    <property type="evidence" value="ECO:0007669"/>
    <property type="project" value="UniProtKB-UniRule"/>
</dbReference>
<dbReference type="GO" id="GO:0008289">
    <property type="term" value="F:lipid binding"/>
    <property type="evidence" value="ECO:0007669"/>
    <property type="project" value="UniProtKB-KW"/>
</dbReference>
<dbReference type="GO" id="GO:0006270">
    <property type="term" value="P:DNA replication initiation"/>
    <property type="evidence" value="ECO:0007669"/>
    <property type="project" value="UniProtKB-UniRule"/>
</dbReference>
<dbReference type="GO" id="GO:0006275">
    <property type="term" value="P:regulation of DNA replication"/>
    <property type="evidence" value="ECO:0007669"/>
    <property type="project" value="UniProtKB-UniRule"/>
</dbReference>
<dbReference type="CDD" id="cd00009">
    <property type="entry name" value="AAA"/>
    <property type="match status" value="1"/>
</dbReference>
<dbReference type="CDD" id="cd06571">
    <property type="entry name" value="Bac_DnaA_C"/>
    <property type="match status" value="1"/>
</dbReference>
<dbReference type="FunFam" id="1.10.1750.10:FF:000002">
    <property type="entry name" value="Chromosomal replication initiator protein DnaA"/>
    <property type="match status" value="1"/>
</dbReference>
<dbReference type="FunFam" id="1.10.8.60:FF:000129">
    <property type="entry name" value="Chromosomal replication initiator protein DnaA"/>
    <property type="match status" value="1"/>
</dbReference>
<dbReference type="FunFam" id="3.40.50.300:FF:000668">
    <property type="entry name" value="Chromosomal replication initiator protein DnaA"/>
    <property type="match status" value="1"/>
</dbReference>
<dbReference type="Gene3D" id="1.10.1750.10">
    <property type="match status" value="1"/>
</dbReference>
<dbReference type="Gene3D" id="1.10.8.60">
    <property type="match status" value="1"/>
</dbReference>
<dbReference type="Gene3D" id="3.40.50.300">
    <property type="entry name" value="P-loop containing nucleotide triphosphate hydrolases"/>
    <property type="match status" value="1"/>
</dbReference>
<dbReference type="HAMAP" id="MF_00377">
    <property type="entry name" value="DnaA_bact"/>
    <property type="match status" value="1"/>
</dbReference>
<dbReference type="InterPro" id="IPR003593">
    <property type="entry name" value="AAA+_ATPase"/>
</dbReference>
<dbReference type="InterPro" id="IPR001957">
    <property type="entry name" value="Chromosome_initiator_DnaA"/>
</dbReference>
<dbReference type="InterPro" id="IPR020591">
    <property type="entry name" value="Chromosome_initiator_DnaA-like"/>
</dbReference>
<dbReference type="InterPro" id="IPR018312">
    <property type="entry name" value="Chromosome_initiator_DnaA_CS"/>
</dbReference>
<dbReference type="InterPro" id="IPR013159">
    <property type="entry name" value="DnaA_C"/>
</dbReference>
<dbReference type="InterPro" id="IPR013317">
    <property type="entry name" value="DnaA_dom"/>
</dbReference>
<dbReference type="InterPro" id="IPR027417">
    <property type="entry name" value="P-loop_NTPase"/>
</dbReference>
<dbReference type="InterPro" id="IPR010921">
    <property type="entry name" value="Trp_repressor/repl_initiator"/>
</dbReference>
<dbReference type="NCBIfam" id="TIGR00362">
    <property type="entry name" value="DnaA"/>
    <property type="match status" value="1"/>
</dbReference>
<dbReference type="PANTHER" id="PTHR30050">
    <property type="entry name" value="CHROMOSOMAL REPLICATION INITIATOR PROTEIN DNAA"/>
    <property type="match status" value="1"/>
</dbReference>
<dbReference type="PANTHER" id="PTHR30050:SF2">
    <property type="entry name" value="CHROMOSOMAL REPLICATION INITIATOR PROTEIN DNAA"/>
    <property type="match status" value="1"/>
</dbReference>
<dbReference type="Pfam" id="PF00308">
    <property type="entry name" value="Bac_DnaA"/>
    <property type="match status" value="1"/>
</dbReference>
<dbReference type="Pfam" id="PF08299">
    <property type="entry name" value="Bac_DnaA_C"/>
    <property type="match status" value="1"/>
</dbReference>
<dbReference type="PRINTS" id="PR00051">
    <property type="entry name" value="DNAA"/>
</dbReference>
<dbReference type="SMART" id="SM00382">
    <property type="entry name" value="AAA"/>
    <property type="match status" value="1"/>
</dbReference>
<dbReference type="SMART" id="SM00760">
    <property type="entry name" value="Bac_DnaA_C"/>
    <property type="match status" value="1"/>
</dbReference>
<dbReference type="SUPFAM" id="SSF52540">
    <property type="entry name" value="P-loop containing nucleoside triphosphate hydrolases"/>
    <property type="match status" value="1"/>
</dbReference>
<dbReference type="SUPFAM" id="SSF48295">
    <property type="entry name" value="TrpR-like"/>
    <property type="match status" value="1"/>
</dbReference>
<dbReference type="PROSITE" id="PS01008">
    <property type="entry name" value="DNAA"/>
    <property type="match status" value="1"/>
</dbReference>
<feature type="chain" id="PRO_1000122024" description="Chromosomal replication initiator protein DnaA">
    <location>
        <begin position="1"/>
        <end position="453"/>
    </location>
</feature>
<feature type="region of interest" description="Domain I, interacts with DnaA modulators" evidence="1">
    <location>
        <begin position="1"/>
        <end position="74"/>
    </location>
</feature>
<feature type="region of interest" description="Domain II" evidence="1">
    <location>
        <begin position="74"/>
        <end position="113"/>
    </location>
</feature>
<feature type="region of interest" description="Domain III, AAA+ region" evidence="1">
    <location>
        <begin position="114"/>
        <end position="331"/>
    </location>
</feature>
<feature type="region of interest" description="Domain IV, binds dsDNA" evidence="1">
    <location>
        <begin position="332"/>
        <end position="453"/>
    </location>
</feature>
<feature type="binding site" evidence="1">
    <location>
        <position position="158"/>
    </location>
    <ligand>
        <name>ATP</name>
        <dbReference type="ChEBI" id="CHEBI:30616"/>
    </ligand>
</feature>
<feature type="binding site" evidence="1">
    <location>
        <position position="160"/>
    </location>
    <ligand>
        <name>ATP</name>
        <dbReference type="ChEBI" id="CHEBI:30616"/>
    </ligand>
</feature>
<feature type="binding site" evidence="1">
    <location>
        <position position="161"/>
    </location>
    <ligand>
        <name>ATP</name>
        <dbReference type="ChEBI" id="CHEBI:30616"/>
    </ligand>
</feature>
<feature type="binding site" evidence="1">
    <location>
        <position position="162"/>
    </location>
    <ligand>
        <name>ATP</name>
        <dbReference type="ChEBI" id="CHEBI:30616"/>
    </ligand>
</feature>
<name>DNAA_STRPI</name>
<sequence>MKEKQFWNRILEFAQERLTRSMYDFYAIQAELIKVEENVATIFLPRSEMEMVWEKQLKDIIVVAGFEIYDAEITPHYIFTKPQDTTSSQVEEATNLTLYDYSPKLVSIPYSDTGLKEKYTFDNFIQGDGNVWAVSAALAVSEDLALTYNPLFIYGGPGLGKTHLLNAIGNEILKNIPNARVKYIPAESFINDFLDHLRLGEMEKFKKTYRSLDLLLIDDIQSLSGKKVATQEEFFNTFNALHDKQKQIVLTSDRSPKHLEGLEERLVTRFSWGLTQTITPPDFETRIAILQSKTEHLGYNFQSDTLEYLAGQFDSNVRDLEGAINDITLIARVKKIKDITIDIAAEAIRARKQDVSQMLVIPIDKIQTEVGNFYGVSIKEMKGSRRLQNIVLARQVAMYLSRELTDNSLPKIGKEFGGKDHTTVIHAHAKIKSLIDQDDNLRLEIESIKKKIK</sequence>
<comment type="function">
    <text evidence="1">Plays an essential role in the initiation and regulation of chromosomal replication. ATP-DnaA binds to the origin of replication (oriC) to initiate formation of the DNA replication initiation complex once per cell cycle. Binds the DnaA box (a 9 base pair repeat at the origin) and separates the double-stranded (ds)DNA. Forms a right-handed helical filament on oriC DNA; dsDNA binds to the exterior of the filament while single-stranded (ss)DNA is stabiized in the filament's interior. The ATP-DnaA-oriC complex binds and stabilizes one strand of the AT-rich DNA unwinding element (DUE), permitting loading of DNA polymerase. After initiation quickly degrades to an ADP-DnaA complex that is not apt for DNA replication. Binds acidic phospholipids.</text>
</comment>
<comment type="subunit">
    <text evidence="1">Oligomerizes as a right-handed, spiral filament on DNA at oriC.</text>
</comment>
<comment type="subcellular location">
    <subcellularLocation>
        <location evidence="1">Cytoplasm</location>
    </subcellularLocation>
</comment>
<comment type="domain">
    <text evidence="1">Domain I is involved in oligomerization and binding regulators, domain II is flexibile and of varying length in different bacteria, domain III forms the AAA+ region, while domain IV binds dsDNA.</text>
</comment>
<comment type="similarity">
    <text evidence="1">Belongs to the DnaA family.</text>
</comment>
<reference key="1">
    <citation type="journal article" date="2010" name="Genome Biol.">
        <title>Structure and dynamics of the pan-genome of Streptococcus pneumoniae and closely related species.</title>
        <authorList>
            <person name="Donati C."/>
            <person name="Hiller N.L."/>
            <person name="Tettelin H."/>
            <person name="Muzzi A."/>
            <person name="Croucher N.J."/>
            <person name="Angiuoli S.V."/>
            <person name="Oggioni M."/>
            <person name="Dunning Hotopp J.C."/>
            <person name="Hu F.Z."/>
            <person name="Riley D.R."/>
            <person name="Covacci A."/>
            <person name="Mitchell T.J."/>
            <person name="Bentley S.D."/>
            <person name="Kilian M."/>
            <person name="Ehrlich G.D."/>
            <person name="Rappuoli R."/>
            <person name="Moxon E.R."/>
            <person name="Masignani V."/>
        </authorList>
    </citation>
    <scope>NUCLEOTIDE SEQUENCE [LARGE SCALE GENOMIC DNA]</scope>
    <source>
        <strain>Hungary19A-6</strain>
    </source>
</reference>